<reference key="1">
    <citation type="journal article" date="2004" name="Proc. Natl. Acad. Sci. U.S.A.">
        <title>Genome sequence of the deep-sea gamma-proteobacterium Idiomarina loihiensis reveals amino acid fermentation as a source of carbon and energy.</title>
        <authorList>
            <person name="Hou S."/>
            <person name="Saw J.H."/>
            <person name="Lee K.S."/>
            <person name="Freitas T.A."/>
            <person name="Belisle C."/>
            <person name="Kawarabayasi Y."/>
            <person name="Donachie S.P."/>
            <person name="Pikina A."/>
            <person name="Galperin M.Y."/>
            <person name="Koonin E.V."/>
            <person name="Makarova K.S."/>
            <person name="Omelchenko M.V."/>
            <person name="Sorokin A."/>
            <person name="Wolf Y.I."/>
            <person name="Li Q.X."/>
            <person name="Keum Y.S."/>
            <person name="Campbell S."/>
            <person name="Denery J."/>
            <person name="Aizawa S."/>
            <person name="Shibata S."/>
            <person name="Malahoff A."/>
            <person name="Alam M."/>
        </authorList>
    </citation>
    <scope>NUCLEOTIDE SEQUENCE [LARGE SCALE GENOMIC DNA]</scope>
    <source>
        <strain>ATCC BAA-735 / DSM 15497 / L2-TR</strain>
    </source>
</reference>
<accession>Q5QY69</accession>
<gene>
    <name evidence="1" type="primary">tmcA</name>
    <name type="ordered locus">IL1997</name>
</gene>
<keyword id="KW-0012">Acyltransferase</keyword>
<keyword id="KW-0067">ATP-binding</keyword>
<keyword id="KW-0963">Cytoplasm</keyword>
<keyword id="KW-0547">Nucleotide-binding</keyword>
<keyword id="KW-1185">Reference proteome</keyword>
<keyword id="KW-0694">RNA-binding</keyword>
<keyword id="KW-0808">Transferase</keyword>
<keyword id="KW-0819">tRNA processing</keyword>
<keyword id="KW-0820">tRNA-binding</keyword>
<organism>
    <name type="scientific">Idiomarina loihiensis (strain ATCC BAA-735 / DSM 15497 / L2-TR)</name>
    <dbReference type="NCBI Taxonomy" id="283942"/>
    <lineage>
        <taxon>Bacteria</taxon>
        <taxon>Pseudomonadati</taxon>
        <taxon>Pseudomonadota</taxon>
        <taxon>Gammaproteobacteria</taxon>
        <taxon>Alteromonadales</taxon>
        <taxon>Idiomarinaceae</taxon>
        <taxon>Idiomarina</taxon>
    </lineage>
</organism>
<evidence type="ECO:0000255" key="1">
    <source>
        <dbReference type="HAMAP-Rule" id="MF_01886"/>
    </source>
</evidence>
<protein>
    <recommendedName>
        <fullName evidence="1">tRNA(Met) cytidine acetyltransferase TmcA</fullName>
        <ecNumber evidence="1">2.3.1.193</ecNumber>
    </recommendedName>
</protein>
<dbReference type="EC" id="2.3.1.193" evidence="1"/>
<dbReference type="EMBL" id="AE017340">
    <property type="protein sequence ID" value="AAV82829.1"/>
    <property type="molecule type" value="Genomic_DNA"/>
</dbReference>
<dbReference type="RefSeq" id="WP_011235225.1">
    <property type="nucleotide sequence ID" value="NC_006512.1"/>
</dbReference>
<dbReference type="SMR" id="Q5QY69"/>
<dbReference type="STRING" id="283942.IL1997"/>
<dbReference type="GeneID" id="41337187"/>
<dbReference type="KEGG" id="ilo:IL1997"/>
<dbReference type="eggNOG" id="COG1444">
    <property type="taxonomic scope" value="Bacteria"/>
</dbReference>
<dbReference type="HOGENOM" id="CLU_004652_1_1_6"/>
<dbReference type="OrthoDB" id="5578851at2"/>
<dbReference type="Proteomes" id="UP000001171">
    <property type="component" value="Chromosome"/>
</dbReference>
<dbReference type="GO" id="GO:0005737">
    <property type="term" value="C:cytoplasm"/>
    <property type="evidence" value="ECO:0007669"/>
    <property type="project" value="UniProtKB-SubCell"/>
</dbReference>
<dbReference type="GO" id="GO:1990883">
    <property type="term" value="F:18S rRNA cytidine N-acetyltransferase activity"/>
    <property type="evidence" value="ECO:0007669"/>
    <property type="project" value="TreeGrafter"/>
</dbReference>
<dbReference type="GO" id="GO:0005524">
    <property type="term" value="F:ATP binding"/>
    <property type="evidence" value="ECO:0007669"/>
    <property type="project" value="UniProtKB-UniRule"/>
</dbReference>
<dbReference type="GO" id="GO:0000049">
    <property type="term" value="F:tRNA binding"/>
    <property type="evidence" value="ECO:0007669"/>
    <property type="project" value="UniProtKB-UniRule"/>
</dbReference>
<dbReference type="GO" id="GO:0051392">
    <property type="term" value="F:tRNA N4-acetyltransferase activity"/>
    <property type="evidence" value="ECO:0007669"/>
    <property type="project" value="UniProtKB-UniRule"/>
</dbReference>
<dbReference type="GO" id="GO:1904812">
    <property type="term" value="P:rRNA acetylation involved in maturation of SSU-rRNA"/>
    <property type="evidence" value="ECO:0007669"/>
    <property type="project" value="TreeGrafter"/>
</dbReference>
<dbReference type="GO" id="GO:0051391">
    <property type="term" value="P:tRNA acetylation"/>
    <property type="evidence" value="ECO:0007669"/>
    <property type="project" value="UniProtKB-UniRule"/>
</dbReference>
<dbReference type="GO" id="GO:0002101">
    <property type="term" value="P:tRNA wobble cytosine modification"/>
    <property type="evidence" value="ECO:0007669"/>
    <property type="project" value="UniProtKB-UniRule"/>
</dbReference>
<dbReference type="Gene3D" id="3.40.50.11040">
    <property type="match status" value="1"/>
</dbReference>
<dbReference type="Gene3D" id="3.40.630.30">
    <property type="match status" value="1"/>
</dbReference>
<dbReference type="Gene3D" id="3.40.50.300">
    <property type="entry name" value="P-loop containing nucleotide triphosphate hydrolases"/>
    <property type="match status" value="1"/>
</dbReference>
<dbReference type="HAMAP" id="MF_01886">
    <property type="entry name" value="tRNA_acetyltr_TmcA"/>
    <property type="match status" value="1"/>
</dbReference>
<dbReference type="InterPro" id="IPR016181">
    <property type="entry name" value="Acyl_CoA_acyltransferase"/>
</dbReference>
<dbReference type="InterPro" id="IPR000182">
    <property type="entry name" value="GNAT_dom"/>
</dbReference>
<dbReference type="InterPro" id="IPR007807">
    <property type="entry name" value="NAT10/TcmA_helicase"/>
</dbReference>
<dbReference type="InterPro" id="IPR027417">
    <property type="entry name" value="P-loop_NTPase"/>
</dbReference>
<dbReference type="InterPro" id="IPR032672">
    <property type="entry name" value="TmcA/NAT10/Kre33"/>
</dbReference>
<dbReference type="InterPro" id="IPR013562">
    <property type="entry name" value="TmcA_N"/>
</dbReference>
<dbReference type="InterPro" id="IPR024914">
    <property type="entry name" value="tRNA_acetyltr_TmcA"/>
</dbReference>
<dbReference type="PANTHER" id="PTHR10925">
    <property type="entry name" value="N-ACETYLTRANSFERASE 10"/>
    <property type="match status" value="1"/>
</dbReference>
<dbReference type="PANTHER" id="PTHR10925:SF5">
    <property type="entry name" value="RNA CYTIDINE ACETYLTRANSFERASE"/>
    <property type="match status" value="1"/>
</dbReference>
<dbReference type="Pfam" id="PF13718">
    <property type="entry name" value="GNAT_acetyltr_2"/>
    <property type="match status" value="1"/>
</dbReference>
<dbReference type="Pfam" id="PF05127">
    <property type="entry name" value="NAT10_TcmA_helicase"/>
    <property type="match status" value="1"/>
</dbReference>
<dbReference type="Pfam" id="PF08351">
    <property type="entry name" value="TmcA_N"/>
    <property type="match status" value="1"/>
</dbReference>
<dbReference type="SUPFAM" id="SSF55729">
    <property type="entry name" value="Acyl-CoA N-acyltransferases (Nat)"/>
    <property type="match status" value="1"/>
</dbReference>
<dbReference type="SUPFAM" id="SSF52540">
    <property type="entry name" value="P-loop containing nucleoside triphosphate hydrolases"/>
    <property type="match status" value="1"/>
</dbReference>
<feature type="chain" id="PRO_0000403121" description="tRNA(Met) cytidine acetyltransferase TmcA">
    <location>
        <begin position="1"/>
        <end position="612"/>
    </location>
</feature>
<feature type="domain" description="N-acetyltransferase" evidence="1">
    <location>
        <begin position="319"/>
        <end position="499"/>
    </location>
</feature>
<feature type="binding site" evidence="1">
    <location>
        <position position="136"/>
    </location>
    <ligand>
        <name>ATP</name>
        <dbReference type="ChEBI" id="CHEBI:30616"/>
    </ligand>
</feature>
<feature type="binding site" evidence="1">
    <location>
        <begin position="161"/>
        <end position="170"/>
    </location>
    <ligand>
        <name>ATP</name>
        <dbReference type="ChEBI" id="CHEBI:30616"/>
    </ligand>
</feature>
<feature type="binding site" evidence="1">
    <location>
        <position position="284"/>
    </location>
    <ligand>
        <name>ATP</name>
        <dbReference type="ChEBI" id="CHEBI:30616"/>
    </ligand>
</feature>
<feature type="binding site" evidence="1">
    <location>
        <begin position="424"/>
        <end position="426"/>
    </location>
    <ligand>
        <name>acetyl-CoA</name>
        <dbReference type="ChEBI" id="CHEBI:57288"/>
    </ligand>
</feature>
<proteinExistence type="inferred from homology"/>
<sequence length="612" mass="69250">MAERSGYRQLQLLQDASLWREYCEARSESSIYLSNLQTHADAVLSRYRDYLGHEFEQVWIDCHDGLHADAIAALCGTVTAGGLLSILLPAESNAMSHRMERFAAKHFAESNIKPYSSVNKTETRSANETLQLTNEQNSIFNALTQSTAKPYETHIITAERGRGKSTLLGQALAQAKEHRSIIVTAPRKANAKVLLQQAPEAHFVAWDKLLEQPGNSEVTLIIDEAAGLPLWATEQLCQKFNPWLLATTVAGYEGCGRGFAVHFTDWARKTLPQVSVHQLTQPLRWPANDPLEQWLTETFLLNEQPVTQFGNRESGTFIKHASELEEALLQQCFQLLLSAHYQSSPNDLNLLLTEPGHKLAYQSTNGEVTAVAWLMSEGPILSPLKEEVRQGQRRPKGNLLPQAIGYFLQQDWAMDLHWLRVARIAVPAAKRRRKAASELLAEIYRWALDNNYQMLGTSFAWSPGLDNFWKKNGYALWRLSSRIDSVSARPAAIYALPLTNEFTELYRVCQLLGQWGQNQLQWLSGGKETLQLTEERNKIRTSLIQAYRSKTIPFDAAHFALAQWFYWQHSNHPLTELLCNSSTTLKHLGEYWGGVSQRQANENLCKEVCLLH</sequence>
<name>TMCA_IDILO</name>
<comment type="function">
    <text evidence="1">Catalyzes the formation of N(4)-acetylcytidine (ac(4)C) at the wobble position of tRNA(Met), by using acetyl-CoA as an acetyl donor and ATP (or GTP).</text>
</comment>
<comment type="catalytic activity">
    <reaction evidence="1">
        <text>cytidine(34) in elongator tRNA(Met) + acetyl-CoA + ATP + H2O = N(4)-acetylcytidine(34) in elongator tRNA(Met) + ADP + phosphate + CoA + H(+)</text>
        <dbReference type="Rhea" id="RHEA:43788"/>
        <dbReference type="Rhea" id="RHEA-COMP:10693"/>
        <dbReference type="Rhea" id="RHEA-COMP:10694"/>
        <dbReference type="ChEBI" id="CHEBI:15377"/>
        <dbReference type="ChEBI" id="CHEBI:15378"/>
        <dbReference type="ChEBI" id="CHEBI:30616"/>
        <dbReference type="ChEBI" id="CHEBI:43474"/>
        <dbReference type="ChEBI" id="CHEBI:57287"/>
        <dbReference type="ChEBI" id="CHEBI:57288"/>
        <dbReference type="ChEBI" id="CHEBI:74900"/>
        <dbReference type="ChEBI" id="CHEBI:82748"/>
        <dbReference type="ChEBI" id="CHEBI:456216"/>
        <dbReference type="EC" id="2.3.1.193"/>
    </reaction>
</comment>
<comment type="subcellular location">
    <subcellularLocation>
        <location evidence="1">Cytoplasm</location>
    </subcellularLocation>
</comment>
<comment type="similarity">
    <text evidence="1">Belongs to the RNA cytidine acetyltransferase family. TmcA subfamily.</text>
</comment>